<dbReference type="EC" id="3.4.21.92" evidence="1"/>
<dbReference type="EMBL" id="CP000449">
    <property type="protein sequence ID" value="ABI65630.1"/>
    <property type="molecule type" value="Genomic_DNA"/>
</dbReference>
<dbReference type="RefSeq" id="WP_011643277.1">
    <property type="nucleotide sequence ID" value="NC_008347.1"/>
</dbReference>
<dbReference type="SMR" id="Q0AQ07"/>
<dbReference type="STRING" id="394221.Mmar10_1338"/>
<dbReference type="MEROPS" id="S14.001"/>
<dbReference type="KEGG" id="mmr:Mmar10_1338"/>
<dbReference type="eggNOG" id="COG0740">
    <property type="taxonomic scope" value="Bacteria"/>
</dbReference>
<dbReference type="HOGENOM" id="CLU_058707_3_2_5"/>
<dbReference type="OrthoDB" id="9802800at2"/>
<dbReference type="Proteomes" id="UP000001964">
    <property type="component" value="Chromosome"/>
</dbReference>
<dbReference type="GO" id="GO:0005737">
    <property type="term" value="C:cytoplasm"/>
    <property type="evidence" value="ECO:0007669"/>
    <property type="project" value="UniProtKB-SubCell"/>
</dbReference>
<dbReference type="GO" id="GO:0009368">
    <property type="term" value="C:endopeptidase Clp complex"/>
    <property type="evidence" value="ECO:0007669"/>
    <property type="project" value="TreeGrafter"/>
</dbReference>
<dbReference type="GO" id="GO:0004176">
    <property type="term" value="F:ATP-dependent peptidase activity"/>
    <property type="evidence" value="ECO:0007669"/>
    <property type="project" value="InterPro"/>
</dbReference>
<dbReference type="GO" id="GO:0051117">
    <property type="term" value="F:ATPase binding"/>
    <property type="evidence" value="ECO:0007669"/>
    <property type="project" value="TreeGrafter"/>
</dbReference>
<dbReference type="GO" id="GO:0004252">
    <property type="term" value="F:serine-type endopeptidase activity"/>
    <property type="evidence" value="ECO:0007669"/>
    <property type="project" value="UniProtKB-UniRule"/>
</dbReference>
<dbReference type="GO" id="GO:0006515">
    <property type="term" value="P:protein quality control for misfolded or incompletely synthesized proteins"/>
    <property type="evidence" value="ECO:0007669"/>
    <property type="project" value="TreeGrafter"/>
</dbReference>
<dbReference type="CDD" id="cd07017">
    <property type="entry name" value="S14_ClpP_2"/>
    <property type="match status" value="1"/>
</dbReference>
<dbReference type="FunFam" id="3.90.226.10:FF:000001">
    <property type="entry name" value="ATP-dependent Clp protease proteolytic subunit"/>
    <property type="match status" value="1"/>
</dbReference>
<dbReference type="Gene3D" id="3.90.226.10">
    <property type="entry name" value="2-enoyl-CoA Hydratase, Chain A, domain 1"/>
    <property type="match status" value="1"/>
</dbReference>
<dbReference type="HAMAP" id="MF_00444">
    <property type="entry name" value="ClpP"/>
    <property type="match status" value="1"/>
</dbReference>
<dbReference type="InterPro" id="IPR001907">
    <property type="entry name" value="ClpP"/>
</dbReference>
<dbReference type="InterPro" id="IPR029045">
    <property type="entry name" value="ClpP/crotonase-like_dom_sf"/>
</dbReference>
<dbReference type="InterPro" id="IPR023562">
    <property type="entry name" value="ClpP/TepA"/>
</dbReference>
<dbReference type="InterPro" id="IPR033135">
    <property type="entry name" value="ClpP_His_AS"/>
</dbReference>
<dbReference type="InterPro" id="IPR018215">
    <property type="entry name" value="ClpP_Ser_AS"/>
</dbReference>
<dbReference type="NCBIfam" id="NF001368">
    <property type="entry name" value="PRK00277.1"/>
    <property type="match status" value="1"/>
</dbReference>
<dbReference type="NCBIfam" id="NF009205">
    <property type="entry name" value="PRK12553.1"/>
    <property type="match status" value="1"/>
</dbReference>
<dbReference type="PANTHER" id="PTHR10381">
    <property type="entry name" value="ATP-DEPENDENT CLP PROTEASE PROTEOLYTIC SUBUNIT"/>
    <property type="match status" value="1"/>
</dbReference>
<dbReference type="PANTHER" id="PTHR10381:SF70">
    <property type="entry name" value="ATP-DEPENDENT CLP PROTEASE PROTEOLYTIC SUBUNIT"/>
    <property type="match status" value="1"/>
</dbReference>
<dbReference type="Pfam" id="PF00574">
    <property type="entry name" value="CLP_protease"/>
    <property type="match status" value="1"/>
</dbReference>
<dbReference type="PRINTS" id="PR00127">
    <property type="entry name" value="CLPPROTEASEP"/>
</dbReference>
<dbReference type="SUPFAM" id="SSF52096">
    <property type="entry name" value="ClpP/crotonase"/>
    <property type="match status" value="1"/>
</dbReference>
<dbReference type="PROSITE" id="PS00382">
    <property type="entry name" value="CLP_PROTEASE_HIS"/>
    <property type="match status" value="1"/>
</dbReference>
<dbReference type="PROSITE" id="PS00381">
    <property type="entry name" value="CLP_PROTEASE_SER"/>
    <property type="match status" value="1"/>
</dbReference>
<reference key="1">
    <citation type="submission" date="2006-08" db="EMBL/GenBank/DDBJ databases">
        <title>Complete sequence of Maricaulis maris MCS10.</title>
        <authorList>
            <consortium name="US DOE Joint Genome Institute"/>
            <person name="Copeland A."/>
            <person name="Lucas S."/>
            <person name="Lapidus A."/>
            <person name="Barry K."/>
            <person name="Detter J.C."/>
            <person name="Glavina del Rio T."/>
            <person name="Hammon N."/>
            <person name="Israni S."/>
            <person name="Dalin E."/>
            <person name="Tice H."/>
            <person name="Pitluck S."/>
            <person name="Saunders E."/>
            <person name="Brettin T."/>
            <person name="Bruce D."/>
            <person name="Han C."/>
            <person name="Tapia R."/>
            <person name="Gilna P."/>
            <person name="Schmutz J."/>
            <person name="Larimer F."/>
            <person name="Land M."/>
            <person name="Hauser L."/>
            <person name="Kyrpides N."/>
            <person name="Mikhailova N."/>
            <person name="Viollier P."/>
            <person name="Stephens C."/>
            <person name="Richardson P."/>
        </authorList>
    </citation>
    <scope>NUCLEOTIDE SEQUENCE [LARGE SCALE GENOMIC DNA]</scope>
    <source>
        <strain>MCS10</strain>
    </source>
</reference>
<organism>
    <name type="scientific">Maricaulis maris (strain MCS10)</name>
    <name type="common">Caulobacter maris</name>
    <dbReference type="NCBI Taxonomy" id="394221"/>
    <lineage>
        <taxon>Bacteria</taxon>
        <taxon>Pseudomonadati</taxon>
        <taxon>Pseudomonadota</taxon>
        <taxon>Alphaproteobacteria</taxon>
        <taxon>Maricaulales</taxon>
        <taxon>Maricaulaceae</taxon>
        <taxon>Maricaulis</taxon>
    </lineage>
</organism>
<evidence type="ECO:0000255" key="1">
    <source>
        <dbReference type="HAMAP-Rule" id="MF_00444"/>
    </source>
</evidence>
<protein>
    <recommendedName>
        <fullName evidence="1">ATP-dependent Clp protease proteolytic subunit</fullName>
        <ecNumber evidence="1">3.4.21.92</ecNumber>
    </recommendedName>
    <alternativeName>
        <fullName evidence="1">Endopeptidase Clp</fullName>
    </alternativeName>
</protein>
<sequence>MHDPQDVMMNLVPIVVEQTSRGERSFDIYSRLLKERIIFITGPIEDHMASLIIAQLLFLESENPKKEISMYINSPGGVVSAGLGIYDTMQYIRSPVSTMCLGMAASMGSLLLTAGEKDMRFAAPNARIMVHQPSGGFRGQASDIERHAADIQKIKRRLNEIYVHHTGRTYDEIESALDRDNFMSAQEGLEFGLVDKVIERRAEDEKEGSDS</sequence>
<feature type="chain" id="PRO_1000026106" description="ATP-dependent Clp protease proteolytic subunit">
    <location>
        <begin position="1"/>
        <end position="211"/>
    </location>
</feature>
<feature type="active site" description="Nucleophile" evidence="1">
    <location>
        <position position="106"/>
    </location>
</feature>
<feature type="active site" evidence="1">
    <location>
        <position position="131"/>
    </location>
</feature>
<name>CLPP_MARMM</name>
<proteinExistence type="inferred from homology"/>
<accession>Q0AQ07</accession>
<gene>
    <name evidence="1" type="primary">clpP</name>
    <name type="ordered locus">Mmar10_1338</name>
</gene>
<comment type="function">
    <text evidence="1">Cleaves peptides in various proteins in a process that requires ATP hydrolysis. Has a chymotrypsin-like activity. Plays a major role in the degradation of misfolded proteins.</text>
</comment>
<comment type="catalytic activity">
    <reaction evidence="1">
        <text>Hydrolysis of proteins to small peptides in the presence of ATP and magnesium. alpha-casein is the usual test substrate. In the absence of ATP, only oligopeptides shorter than five residues are hydrolyzed (such as succinyl-Leu-Tyr-|-NHMec, and Leu-Tyr-Leu-|-Tyr-Trp, in which cleavage of the -Tyr-|-Leu- and -Tyr-|-Trp bonds also occurs).</text>
        <dbReference type="EC" id="3.4.21.92"/>
    </reaction>
</comment>
<comment type="subunit">
    <text evidence="1">Fourteen ClpP subunits assemble into 2 heptameric rings which stack back to back to give a disk-like structure with a central cavity, resembling the structure of eukaryotic proteasomes.</text>
</comment>
<comment type="subcellular location">
    <subcellularLocation>
        <location evidence="1">Cytoplasm</location>
    </subcellularLocation>
</comment>
<comment type="similarity">
    <text evidence="1">Belongs to the peptidase S14 family.</text>
</comment>
<keyword id="KW-0963">Cytoplasm</keyword>
<keyword id="KW-0378">Hydrolase</keyword>
<keyword id="KW-0645">Protease</keyword>
<keyword id="KW-1185">Reference proteome</keyword>
<keyword id="KW-0720">Serine protease</keyword>